<organism>
    <name type="scientific">Shewanella piezotolerans (strain WP3 / JCM 13877)</name>
    <dbReference type="NCBI Taxonomy" id="225849"/>
    <lineage>
        <taxon>Bacteria</taxon>
        <taxon>Pseudomonadati</taxon>
        <taxon>Pseudomonadota</taxon>
        <taxon>Gammaproteobacteria</taxon>
        <taxon>Alteromonadales</taxon>
        <taxon>Shewanellaceae</taxon>
        <taxon>Shewanella</taxon>
    </lineage>
</organism>
<name>RL15_SHEPW</name>
<gene>
    <name evidence="1" type="primary">rplO</name>
    <name type="ordered locus">swp_2030</name>
</gene>
<reference key="1">
    <citation type="journal article" date="2008" name="PLoS ONE">
        <title>Environmental adaptation: genomic analysis of the piezotolerant and psychrotolerant deep-sea iron reducing bacterium Shewanella piezotolerans WP3.</title>
        <authorList>
            <person name="Wang F."/>
            <person name="Wang J."/>
            <person name="Jian H."/>
            <person name="Zhang B."/>
            <person name="Li S."/>
            <person name="Wang F."/>
            <person name="Zeng X."/>
            <person name="Gao L."/>
            <person name="Bartlett D.H."/>
            <person name="Yu J."/>
            <person name="Hu S."/>
            <person name="Xiao X."/>
        </authorList>
    </citation>
    <scope>NUCLEOTIDE SEQUENCE [LARGE SCALE GENOMIC DNA]</scope>
    <source>
        <strain>WP3 / JCM 13877</strain>
    </source>
</reference>
<dbReference type="EMBL" id="CP000472">
    <property type="protein sequence ID" value="ACJ28786.1"/>
    <property type="molecule type" value="Genomic_DNA"/>
</dbReference>
<dbReference type="RefSeq" id="WP_020912154.1">
    <property type="nucleotide sequence ID" value="NC_011566.1"/>
</dbReference>
<dbReference type="SMR" id="B8CNF2"/>
<dbReference type="STRING" id="225849.swp_2030"/>
<dbReference type="KEGG" id="swp:swp_2030"/>
<dbReference type="eggNOG" id="COG0200">
    <property type="taxonomic scope" value="Bacteria"/>
</dbReference>
<dbReference type="HOGENOM" id="CLU_055188_4_2_6"/>
<dbReference type="OrthoDB" id="9810293at2"/>
<dbReference type="Proteomes" id="UP000000753">
    <property type="component" value="Chromosome"/>
</dbReference>
<dbReference type="GO" id="GO:0022625">
    <property type="term" value="C:cytosolic large ribosomal subunit"/>
    <property type="evidence" value="ECO:0007669"/>
    <property type="project" value="TreeGrafter"/>
</dbReference>
<dbReference type="GO" id="GO:0019843">
    <property type="term" value="F:rRNA binding"/>
    <property type="evidence" value="ECO:0007669"/>
    <property type="project" value="UniProtKB-UniRule"/>
</dbReference>
<dbReference type="GO" id="GO:0003735">
    <property type="term" value="F:structural constituent of ribosome"/>
    <property type="evidence" value="ECO:0007669"/>
    <property type="project" value="InterPro"/>
</dbReference>
<dbReference type="GO" id="GO:0006412">
    <property type="term" value="P:translation"/>
    <property type="evidence" value="ECO:0007669"/>
    <property type="project" value="UniProtKB-UniRule"/>
</dbReference>
<dbReference type="FunFam" id="3.100.10.10:FF:000003">
    <property type="entry name" value="50S ribosomal protein L15"/>
    <property type="match status" value="1"/>
</dbReference>
<dbReference type="Gene3D" id="3.100.10.10">
    <property type="match status" value="1"/>
</dbReference>
<dbReference type="HAMAP" id="MF_01341">
    <property type="entry name" value="Ribosomal_uL15"/>
    <property type="match status" value="1"/>
</dbReference>
<dbReference type="InterPro" id="IPR030878">
    <property type="entry name" value="Ribosomal_uL15"/>
</dbReference>
<dbReference type="InterPro" id="IPR021131">
    <property type="entry name" value="Ribosomal_uL15/eL18"/>
</dbReference>
<dbReference type="InterPro" id="IPR036227">
    <property type="entry name" value="Ribosomal_uL15/eL18_sf"/>
</dbReference>
<dbReference type="InterPro" id="IPR005749">
    <property type="entry name" value="Ribosomal_uL15_bac-type"/>
</dbReference>
<dbReference type="InterPro" id="IPR001196">
    <property type="entry name" value="Ribosomal_uL15_CS"/>
</dbReference>
<dbReference type="NCBIfam" id="TIGR01071">
    <property type="entry name" value="rplO_bact"/>
    <property type="match status" value="1"/>
</dbReference>
<dbReference type="PANTHER" id="PTHR12934">
    <property type="entry name" value="50S RIBOSOMAL PROTEIN L15"/>
    <property type="match status" value="1"/>
</dbReference>
<dbReference type="PANTHER" id="PTHR12934:SF11">
    <property type="entry name" value="LARGE RIBOSOMAL SUBUNIT PROTEIN UL15M"/>
    <property type="match status" value="1"/>
</dbReference>
<dbReference type="Pfam" id="PF00828">
    <property type="entry name" value="Ribosomal_L27A"/>
    <property type="match status" value="1"/>
</dbReference>
<dbReference type="SUPFAM" id="SSF52080">
    <property type="entry name" value="Ribosomal proteins L15p and L18e"/>
    <property type="match status" value="1"/>
</dbReference>
<dbReference type="PROSITE" id="PS00475">
    <property type="entry name" value="RIBOSOMAL_L15"/>
    <property type="match status" value="1"/>
</dbReference>
<proteinExistence type="inferred from homology"/>
<protein>
    <recommendedName>
        <fullName evidence="1">Large ribosomal subunit protein uL15</fullName>
    </recommendedName>
    <alternativeName>
        <fullName evidence="3">50S ribosomal protein L15</fullName>
    </alternativeName>
</protein>
<evidence type="ECO:0000255" key="1">
    <source>
        <dbReference type="HAMAP-Rule" id="MF_01341"/>
    </source>
</evidence>
<evidence type="ECO:0000256" key="2">
    <source>
        <dbReference type="SAM" id="MobiDB-lite"/>
    </source>
</evidence>
<evidence type="ECO:0000305" key="3"/>
<feature type="chain" id="PRO_1000142880" description="Large ribosomal subunit protein uL15">
    <location>
        <begin position="1"/>
        <end position="144"/>
    </location>
</feature>
<feature type="region of interest" description="Disordered" evidence="2">
    <location>
        <begin position="1"/>
        <end position="49"/>
    </location>
</feature>
<feature type="compositionally biased region" description="Gly residues" evidence="2">
    <location>
        <begin position="21"/>
        <end position="31"/>
    </location>
</feature>
<accession>B8CNF2</accession>
<sequence length="144" mass="14944">MRLNTLSPAAGAKSAAKRVGRGIGSGLGKTAGRGHKGQKSRSGGGVRVGFEGGQMPLKIRLPKFGFTSRRALVSAEVRISELAKVNGDVIDLNALKDANLVTRNIQFAKIVLSGTIERPVTVKGLKVTKGARAAIEAAGGKIEE</sequence>
<comment type="function">
    <text evidence="1">Binds to the 23S rRNA.</text>
</comment>
<comment type="subunit">
    <text evidence="1">Part of the 50S ribosomal subunit.</text>
</comment>
<comment type="similarity">
    <text evidence="1">Belongs to the universal ribosomal protein uL15 family.</text>
</comment>
<keyword id="KW-0687">Ribonucleoprotein</keyword>
<keyword id="KW-0689">Ribosomal protein</keyword>
<keyword id="KW-0694">RNA-binding</keyword>
<keyword id="KW-0699">rRNA-binding</keyword>